<dbReference type="EMBL" id="Z48151">
    <property type="protein sequence ID" value="CAA88168.1"/>
    <property type="molecule type" value="Genomic_DNA"/>
</dbReference>
<dbReference type="PIR" id="S66490">
    <property type="entry name" value="S66490"/>
</dbReference>
<dbReference type="SMR" id="Q29003"/>
<dbReference type="FunCoup" id="Q29003">
    <property type="interactions" value="1"/>
</dbReference>
<dbReference type="STRING" id="9823.ENSSSCP00000055016"/>
<dbReference type="PaxDb" id="9823-ENSSSCP00000022846"/>
<dbReference type="eggNOG" id="KOG3656">
    <property type="taxonomic scope" value="Eukaryota"/>
</dbReference>
<dbReference type="InParanoid" id="Q29003"/>
<dbReference type="Proteomes" id="UP000008227">
    <property type="component" value="Unplaced"/>
</dbReference>
<dbReference type="Proteomes" id="UP000314985">
    <property type="component" value="Unplaced"/>
</dbReference>
<dbReference type="Proteomes" id="UP000694570">
    <property type="component" value="Unplaced"/>
</dbReference>
<dbReference type="Proteomes" id="UP000694571">
    <property type="component" value="Unplaced"/>
</dbReference>
<dbReference type="Proteomes" id="UP000694720">
    <property type="component" value="Unplaced"/>
</dbReference>
<dbReference type="Proteomes" id="UP000694722">
    <property type="component" value="Unplaced"/>
</dbReference>
<dbReference type="Proteomes" id="UP000694723">
    <property type="component" value="Unplaced"/>
</dbReference>
<dbReference type="Proteomes" id="UP000694724">
    <property type="component" value="Unplaced"/>
</dbReference>
<dbReference type="Proteomes" id="UP000694725">
    <property type="component" value="Unplaced"/>
</dbReference>
<dbReference type="Proteomes" id="UP000694726">
    <property type="component" value="Unplaced"/>
</dbReference>
<dbReference type="Proteomes" id="UP000694727">
    <property type="component" value="Unplaced"/>
</dbReference>
<dbReference type="Proteomes" id="UP000694728">
    <property type="component" value="Unplaced"/>
</dbReference>
<dbReference type="GO" id="GO:0030425">
    <property type="term" value="C:dendrite"/>
    <property type="evidence" value="ECO:0000318"/>
    <property type="project" value="GO_Central"/>
</dbReference>
<dbReference type="GO" id="GO:0005886">
    <property type="term" value="C:plasma membrane"/>
    <property type="evidence" value="ECO:0000250"/>
    <property type="project" value="UniProtKB"/>
</dbReference>
<dbReference type="GO" id="GO:0045202">
    <property type="term" value="C:synapse"/>
    <property type="evidence" value="ECO:0007669"/>
    <property type="project" value="GOC"/>
</dbReference>
<dbReference type="GO" id="GO:0004993">
    <property type="term" value="F:G protein-coupled serotonin receptor activity"/>
    <property type="evidence" value="ECO:0000250"/>
    <property type="project" value="UniProtKB"/>
</dbReference>
<dbReference type="GO" id="GO:0030594">
    <property type="term" value="F:neurotransmitter receptor activity"/>
    <property type="evidence" value="ECO:0000318"/>
    <property type="project" value="GO_Central"/>
</dbReference>
<dbReference type="GO" id="GO:0007193">
    <property type="term" value="P:adenylate cyclase-inhibiting G protein-coupled receptor signaling pathway"/>
    <property type="evidence" value="ECO:0000250"/>
    <property type="project" value="UniProtKB"/>
</dbReference>
<dbReference type="GO" id="GO:0007198">
    <property type="term" value="P:adenylate cyclase-inhibiting serotonin receptor signaling pathway"/>
    <property type="evidence" value="ECO:0000318"/>
    <property type="project" value="GO_Central"/>
</dbReference>
<dbReference type="GO" id="GO:0007268">
    <property type="term" value="P:chemical synaptic transmission"/>
    <property type="evidence" value="ECO:0000318"/>
    <property type="project" value="GO_Central"/>
</dbReference>
<dbReference type="GO" id="GO:0007187">
    <property type="term" value="P:G protein-coupled receptor signaling pathway, coupled to cyclic nucleotide second messenger"/>
    <property type="evidence" value="ECO:0000318"/>
    <property type="project" value="GO_Central"/>
</dbReference>
<dbReference type="Gene3D" id="1.20.1070.10">
    <property type="entry name" value="Rhodopsin 7-helix transmembrane proteins"/>
    <property type="match status" value="1"/>
</dbReference>
<dbReference type="InterPro" id="IPR000276">
    <property type="entry name" value="GPCR_Rhodpsn"/>
</dbReference>
<dbReference type="InterPro" id="IPR017452">
    <property type="entry name" value="GPCR_Rhodpsn_7TM"/>
</dbReference>
<dbReference type="PANTHER" id="PTHR24247">
    <property type="entry name" value="5-HYDROXYTRYPTAMINE RECEPTOR"/>
    <property type="match status" value="1"/>
</dbReference>
<dbReference type="PANTHER" id="PTHR24247:SF33">
    <property type="entry name" value="5-HYDROXYTRYPTAMINE RECEPTOR 1E"/>
    <property type="match status" value="1"/>
</dbReference>
<dbReference type="Pfam" id="PF00001">
    <property type="entry name" value="7tm_1"/>
    <property type="match status" value="1"/>
</dbReference>
<dbReference type="PRINTS" id="PR00237">
    <property type="entry name" value="GPCRRHODOPSN"/>
</dbReference>
<dbReference type="SUPFAM" id="SSF81321">
    <property type="entry name" value="Family A G protein-coupled receptor-like"/>
    <property type="match status" value="1"/>
</dbReference>
<dbReference type="PROSITE" id="PS00237">
    <property type="entry name" value="G_PROTEIN_RECEP_F1_1"/>
    <property type="match status" value="1"/>
</dbReference>
<dbReference type="PROSITE" id="PS50262">
    <property type="entry name" value="G_PROTEIN_RECEP_F1_2"/>
    <property type="match status" value="1"/>
</dbReference>
<name>5HT1E_PIG</name>
<gene>
    <name type="primary">HTR1E</name>
</gene>
<sequence>HQPANYLICSLAVTDLLVAVLVMPLSIMYIVMDSWRLGYFICEVWLSVDMTCCTCSILHLCVIALDRYWAITNAIEYARKRTAKRAGLMILTVWTISIFISMPPLFWRSHRQLSPPPSQCAIQHDHVIYTIYSTLGAFYIPLTLILILY</sequence>
<evidence type="ECO:0000250" key="1">
    <source>
        <dbReference type="UniProtKB" id="P28221"/>
    </source>
</evidence>
<evidence type="ECO:0000250" key="2">
    <source>
        <dbReference type="UniProtKB" id="P28566"/>
    </source>
</evidence>
<evidence type="ECO:0000250" key="3">
    <source>
        <dbReference type="UniProtKB" id="P41595"/>
    </source>
</evidence>
<evidence type="ECO:0000255" key="4">
    <source>
        <dbReference type="PROSITE-ProRule" id="PRU00521"/>
    </source>
</evidence>
<reference key="1">
    <citation type="journal article" date="1995" name="FEBS Lett.">
        <title>Expression of serotonin receptor mRNAs in blood vessels.</title>
        <authorList>
            <person name="Ullmer C."/>
            <person name="Schmuck K."/>
            <person name="Kalkman H.O."/>
            <person name="Luebbert H."/>
        </authorList>
    </citation>
    <scope>NUCLEOTIDE SEQUENCE [GENOMIC DNA]</scope>
</reference>
<keyword id="KW-1003">Cell membrane</keyword>
<keyword id="KW-1015">Disulfide bond</keyword>
<keyword id="KW-0297">G-protein coupled receptor</keyword>
<keyword id="KW-0472">Membrane</keyword>
<keyword id="KW-0675">Receptor</keyword>
<keyword id="KW-1185">Reference proteome</keyword>
<keyword id="KW-0807">Transducer</keyword>
<keyword id="KW-0812">Transmembrane</keyword>
<keyword id="KW-1133">Transmembrane helix</keyword>
<accession>Q29003</accession>
<proteinExistence type="inferred from homology"/>
<comment type="function">
    <text evidence="2">G-protein coupled receptor for 5-hydroxytryptamine (serotonin). Also functions as a receptor for various alkaloids and psychoactive substances. Ligand binding causes a conformation change that triggers signaling via guanine nucleotide-binding proteins (G proteins) and modulates the activity of downstream effectors, such as adenylate cyclase. HTR1E is coupled to G(i)/G(o) G alpha proteins and mediates inhibitory neurotransmission by inhibiting adenylate cyclase activity.</text>
</comment>
<comment type="subcellular location">
    <subcellularLocation>
        <location evidence="2">Cell membrane</location>
        <topology evidence="2">Multi-pass membrane protein</topology>
    </subcellularLocation>
</comment>
<comment type="similarity">
    <text evidence="4">Belongs to the G-protein coupled receptor 1 family.</text>
</comment>
<organism>
    <name type="scientific">Sus scrofa</name>
    <name type="common">Pig</name>
    <dbReference type="NCBI Taxonomy" id="9823"/>
    <lineage>
        <taxon>Eukaryota</taxon>
        <taxon>Metazoa</taxon>
        <taxon>Chordata</taxon>
        <taxon>Craniata</taxon>
        <taxon>Vertebrata</taxon>
        <taxon>Euteleostomi</taxon>
        <taxon>Mammalia</taxon>
        <taxon>Eutheria</taxon>
        <taxon>Laurasiatheria</taxon>
        <taxon>Artiodactyla</taxon>
        <taxon>Suina</taxon>
        <taxon>Suidae</taxon>
        <taxon>Sus</taxon>
    </lineage>
</organism>
<feature type="chain" id="PRO_0000068935" description="5-hydroxytryptamine receptor 1E">
    <location>
        <begin position="1" status="less than"/>
        <end position="149" status="greater than"/>
    </location>
</feature>
<feature type="topological domain" description="Extracellular" evidence="2">
    <location>
        <begin position="1" status="less than"/>
        <end position="6"/>
    </location>
</feature>
<feature type="transmembrane region" description="Helical; Name=2" evidence="2">
    <location>
        <begin position="7"/>
        <end position="31"/>
    </location>
</feature>
<feature type="topological domain" description="Cytoplasmic" evidence="2">
    <location>
        <begin position="32"/>
        <end position="39"/>
    </location>
</feature>
<feature type="transmembrane region" description="Helical; Name=3" evidence="2">
    <location>
        <begin position="40"/>
        <end position="65"/>
    </location>
</feature>
<feature type="topological domain" description="Extracellular" evidence="2">
    <location>
        <begin position="66"/>
        <end position="85"/>
    </location>
</feature>
<feature type="transmembrane region" description="Helical; Name=4" evidence="2">
    <location>
        <begin position="86"/>
        <end position="104"/>
    </location>
</feature>
<feature type="topological domain" description="Cytoplasmic" evidence="2">
    <location>
        <begin position="105"/>
        <end position="149" status="greater than"/>
    </location>
</feature>
<feature type="short sequence motif" description="DRY motif; important for ligand-induced conformation changes" evidence="3">
    <location>
        <begin position="66"/>
        <end position="68"/>
    </location>
</feature>
<feature type="binding site" evidence="1">
    <location>
        <position position="49"/>
    </location>
    <ligand>
        <name>serotonin</name>
        <dbReference type="ChEBI" id="CHEBI:350546"/>
    </ligand>
</feature>
<feature type="binding site" evidence="1">
    <location>
        <position position="53"/>
    </location>
    <ligand>
        <name>serotonin</name>
        <dbReference type="ChEBI" id="CHEBI:350546"/>
    </ligand>
</feature>
<feature type="disulfide bond" evidence="4">
    <location>
        <begin position="42"/>
        <end position="120"/>
    </location>
</feature>
<feature type="non-terminal residue">
    <location>
        <position position="1"/>
    </location>
</feature>
<feature type="non-terminal residue">
    <location>
        <position position="149"/>
    </location>
</feature>
<protein>
    <recommendedName>
        <fullName>5-hydroxytryptamine receptor 1E</fullName>
        <shortName>5-HT-1E</shortName>
        <shortName>5-HT1E</shortName>
    </recommendedName>
    <alternativeName>
        <fullName>Serotonin receptor 1E</fullName>
    </alternativeName>
</protein>